<feature type="chain" id="PRO_1000149123" description="2-isopropylmalate synthase">
    <location>
        <begin position="1"/>
        <end position="517"/>
    </location>
</feature>
<feature type="domain" description="Pyruvate carboxyltransferase" evidence="1">
    <location>
        <begin position="6"/>
        <end position="267"/>
    </location>
</feature>
<feature type="region of interest" description="Regulatory domain" evidence="1">
    <location>
        <begin position="393"/>
        <end position="517"/>
    </location>
</feature>
<feature type="binding site" evidence="1">
    <location>
        <position position="15"/>
    </location>
    <ligand>
        <name>Mn(2+)</name>
        <dbReference type="ChEBI" id="CHEBI:29035"/>
    </ligand>
</feature>
<feature type="binding site" evidence="1">
    <location>
        <position position="201"/>
    </location>
    <ligand>
        <name>Mn(2+)</name>
        <dbReference type="ChEBI" id="CHEBI:29035"/>
    </ligand>
</feature>
<feature type="binding site" evidence="1">
    <location>
        <position position="203"/>
    </location>
    <ligand>
        <name>Mn(2+)</name>
        <dbReference type="ChEBI" id="CHEBI:29035"/>
    </ligand>
</feature>
<feature type="binding site" evidence="1">
    <location>
        <position position="237"/>
    </location>
    <ligand>
        <name>Mn(2+)</name>
        <dbReference type="ChEBI" id="CHEBI:29035"/>
    </ligand>
</feature>
<proteinExistence type="inferred from homology"/>
<evidence type="ECO:0000255" key="1">
    <source>
        <dbReference type="HAMAP-Rule" id="MF_01025"/>
    </source>
</evidence>
<gene>
    <name evidence="1" type="primary">leuA</name>
    <name type="ordered locus">Abu_0456</name>
</gene>
<name>LEU1_ALIB4</name>
<accession>A8ES07</accession>
<protein>
    <recommendedName>
        <fullName evidence="1">2-isopropylmalate synthase</fullName>
        <ecNumber evidence="1">2.3.3.13</ecNumber>
    </recommendedName>
    <alternativeName>
        <fullName evidence="1">Alpha-IPM synthase</fullName>
    </alternativeName>
    <alternativeName>
        <fullName evidence="1">Alpha-isopropylmalate synthase</fullName>
    </alternativeName>
</protein>
<reference key="1">
    <citation type="journal article" date="2007" name="PLoS ONE">
        <title>The complete genome sequence and analysis of the Epsilonproteobacterium Arcobacter butzleri.</title>
        <authorList>
            <person name="Miller W.G."/>
            <person name="Parker C.T."/>
            <person name="Rubenfield M."/>
            <person name="Mendz G.L."/>
            <person name="Woesten M.M.S.M."/>
            <person name="Ussery D.W."/>
            <person name="Stolz J.F."/>
            <person name="Binnewies T.T."/>
            <person name="Hallin P.F."/>
            <person name="Wang G."/>
            <person name="Malek J.A."/>
            <person name="Rogosin A."/>
            <person name="Stanker L.H."/>
            <person name="Mandrell R.E."/>
        </authorList>
    </citation>
    <scope>NUCLEOTIDE SEQUENCE [LARGE SCALE GENOMIC DNA]</scope>
    <source>
        <strain>RM4018</strain>
    </source>
</reference>
<keyword id="KW-0028">Amino-acid biosynthesis</keyword>
<keyword id="KW-0100">Branched-chain amino acid biosynthesis</keyword>
<keyword id="KW-0963">Cytoplasm</keyword>
<keyword id="KW-0432">Leucine biosynthesis</keyword>
<keyword id="KW-0464">Manganese</keyword>
<keyword id="KW-0479">Metal-binding</keyword>
<keyword id="KW-1185">Reference proteome</keyword>
<keyword id="KW-0808">Transferase</keyword>
<comment type="function">
    <text evidence="1">Catalyzes the condensation of the acetyl group of acetyl-CoA with 3-methyl-2-oxobutanoate (2-ketoisovalerate) to form 3-carboxy-3-hydroxy-4-methylpentanoate (2-isopropylmalate).</text>
</comment>
<comment type="catalytic activity">
    <reaction evidence="1">
        <text>3-methyl-2-oxobutanoate + acetyl-CoA + H2O = (2S)-2-isopropylmalate + CoA + H(+)</text>
        <dbReference type="Rhea" id="RHEA:21524"/>
        <dbReference type="ChEBI" id="CHEBI:1178"/>
        <dbReference type="ChEBI" id="CHEBI:11851"/>
        <dbReference type="ChEBI" id="CHEBI:15377"/>
        <dbReference type="ChEBI" id="CHEBI:15378"/>
        <dbReference type="ChEBI" id="CHEBI:57287"/>
        <dbReference type="ChEBI" id="CHEBI:57288"/>
        <dbReference type="EC" id="2.3.3.13"/>
    </reaction>
</comment>
<comment type="cofactor">
    <cofactor evidence="1">
        <name>Mn(2+)</name>
        <dbReference type="ChEBI" id="CHEBI:29035"/>
    </cofactor>
</comment>
<comment type="pathway">
    <text evidence="1">Amino-acid biosynthesis; L-leucine biosynthesis; L-leucine from 3-methyl-2-oxobutanoate: step 1/4.</text>
</comment>
<comment type="subunit">
    <text evidence="1">Homodimer.</text>
</comment>
<comment type="subcellular location">
    <subcellularLocation>
        <location evidence="1">Cytoplasm</location>
    </subcellularLocation>
</comment>
<comment type="similarity">
    <text evidence="1">Belongs to the alpha-IPM synthase/homocitrate synthase family. LeuA type 1 subfamily.</text>
</comment>
<dbReference type="EC" id="2.3.3.13" evidence="1"/>
<dbReference type="EMBL" id="CP000361">
    <property type="protein sequence ID" value="ABV66731.1"/>
    <property type="molecule type" value="Genomic_DNA"/>
</dbReference>
<dbReference type="RefSeq" id="WP_012012272.1">
    <property type="nucleotide sequence ID" value="NC_009850.1"/>
</dbReference>
<dbReference type="SMR" id="A8ES07"/>
<dbReference type="STRING" id="367737.Abu_0456"/>
<dbReference type="GeneID" id="24303422"/>
<dbReference type="KEGG" id="abu:Abu_0456"/>
<dbReference type="eggNOG" id="COG0119">
    <property type="taxonomic scope" value="Bacteria"/>
</dbReference>
<dbReference type="HOGENOM" id="CLU_022158_0_1_7"/>
<dbReference type="UniPathway" id="UPA00048">
    <property type="reaction ID" value="UER00070"/>
</dbReference>
<dbReference type="Proteomes" id="UP000001136">
    <property type="component" value="Chromosome"/>
</dbReference>
<dbReference type="GO" id="GO:0005737">
    <property type="term" value="C:cytoplasm"/>
    <property type="evidence" value="ECO:0007669"/>
    <property type="project" value="UniProtKB-SubCell"/>
</dbReference>
<dbReference type="GO" id="GO:0003852">
    <property type="term" value="F:2-isopropylmalate synthase activity"/>
    <property type="evidence" value="ECO:0007669"/>
    <property type="project" value="UniProtKB-UniRule"/>
</dbReference>
<dbReference type="GO" id="GO:0003985">
    <property type="term" value="F:acetyl-CoA C-acetyltransferase activity"/>
    <property type="evidence" value="ECO:0007669"/>
    <property type="project" value="UniProtKB-UniRule"/>
</dbReference>
<dbReference type="GO" id="GO:0030145">
    <property type="term" value="F:manganese ion binding"/>
    <property type="evidence" value="ECO:0007669"/>
    <property type="project" value="UniProtKB-UniRule"/>
</dbReference>
<dbReference type="GO" id="GO:0009098">
    <property type="term" value="P:L-leucine biosynthetic process"/>
    <property type="evidence" value="ECO:0007669"/>
    <property type="project" value="UniProtKB-UniRule"/>
</dbReference>
<dbReference type="CDD" id="cd07940">
    <property type="entry name" value="DRE_TIM_IPMS"/>
    <property type="match status" value="1"/>
</dbReference>
<dbReference type="FunFam" id="1.10.238.260:FF:000001">
    <property type="entry name" value="2-isopropylmalate synthase"/>
    <property type="match status" value="1"/>
</dbReference>
<dbReference type="FunFam" id="3.20.20.70:FF:000010">
    <property type="entry name" value="2-isopropylmalate synthase"/>
    <property type="match status" value="1"/>
</dbReference>
<dbReference type="Gene3D" id="1.10.238.260">
    <property type="match status" value="1"/>
</dbReference>
<dbReference type="Gene3D" id="3.30.160.270">
    <property type="match status" value="1"/>
</dbReference>
<dbReference type="Gene3D" id="3.20.20.70">
    <property type="entry name" value="Aldolase class I"/>
    <property type="match status" value="1"/>
</dbReference>
<dbReference type="HAMAP" id="MF_01025">
    <property type="entry name" value="LeuA_type1"/>
    <property type="match status" value="1"/>
</dbReference>
<dbReference type="InterPro" id="IPR050073">
    <property type="entry name" value="2-IPM_HCS-like"/>
</dbReference>
<dbReference type="InterPro" id="IPR013709">
    <property type="entry name" value="2-isopropylmalate_synth_dimer"/>
</dbReference>
<dbReference type="InterPro" id="IPR002034">
    <property type="entry name" value="AIPM/Hcit_synth_CS"/>
</dbReference>
<dbReference type="InterPro" id="IPR013785">
    <property type="entry name" value="Aldolase_TIM"/>
</dbReference>
<dbReference type="InterPro" id="IPR054691">
    <property type="entry name" value="LeuA/HCS_post-cat"/>
</dbReference>
<dbReference type="InterPro" id="IPR036230">
    <property type="entry name" value="LeuA_allosteric_dom_sf"/>
</dbReference>
<dbReference type="InterPro" id="IPR005671">
    <property type="entry name" value="LeuA_bact_synth"/>
</dbReference>
<dbReference type="InterPro" id="IPR000891">
    <property type="entry name" value="PYR_CT"/>
</dbReference>
<dbReference type="NCBIfam" id="TIGR00973">
    <property type="entry name" value="leuA_bact"/>
    <property type="match status" value="1"/>
</dbReference>
<dbReference type="NCBIfam" id="NF002086">
    <property type="entry name" value="PRK00915.1-3"/>
    <property type="match status" value="1"/>
</dbReference>
<dbReference type="PANTHER" id="PTHR10277:SF9">
    <property type="entry name" value="2-ISOPROPYLMALATE SYNTHASE 1, CHLOROPLASTIC-RELATED"/>
    <property type="match status" value="1"/>
</dbReference>
<dbReference type="PANTHER" id="PTHR10277">
    <property type="entry name" value="HOMOCITRATE SYNTHASE-RELATED"/>
    <property type="match status" value="1"/>
</dbReference>
<dbReference type="Pfam" id="PF22617">
    <property type="entry name" value="HCS_D2"/>
    <property type="match status" value="1"/>
</dbReference>
<dbReference type="Pfam" id="PF00682">
    <property type="entry name" value="HMGL-like"/>
    <property type="match status" value="1"/>
</dbReference>
<dbReference type="Pfam" id="PF08502">
    <property type="entry name" value="LeuA_dimer"/>
    <property type="match status" value="1"/>
</dbReference>
<dbReference type="SMART" id="SM00917">
    <property type="entry name" value="LeuA_dimer"/>
    <property type="match status" value="1"/>
</dbReference>
<dbReference type="SUPFAM" id="SSF110921">
    <property type="entry name" value="2-isopropylmalate synthase LeuA, allosteric (dimerisation) domain"/>
    <property type="match status" value="1"/>
</dbReference>
<dbReference type="SUPFAM" id="SSF51569">
    <property type="entry name" value="Aldolase"/>
    <property type="match status" value="1"/>
</dbReference>
<dbReference type="PROSITE" id="PS00815">
    <property type="entry name" value="AIPM_HOMOCIT_SYNTH_1"/>
    <property type="match status" value="1"/>
</dbReference>
<dbReference type="PROSITE" id="PS00816">
    <property type="entry name" value="AIPM_HOMOCIT_SYNTH_2"/>
    <property type="match status" value="1"/>
</dbReference>
<dbReference type="PROSITE" id="PS50991">
    <property type="entry name" value="PYR_CT"/>
    <property type="match status" value="1"/>
</dbReference>
<sequence length="517" mass="55950">MDKNKIIVFDTTLRDGEQSPGCSMNTEEKIKVALQLEKLGVDVIEAGFAAASPGDFDAVSRIAQIIKNSSICSLARAVDNDIKQAGLAVQSAAKSRIHTFIATSPIHMQYKLKMSGDEVIKRAIRAVEYAKTFVDDVEFSLEDAGRSEIPFMKEVMDAVIGAGAKTINLPDTVGYRLPTELGAMVKELSAYAGDRAIISVHNHNDLGLATANTLAAVLNGARQIEVTINGLGERAGNSALEEAVMAIKTRKDAFGDLYTTINTPEIYATSRLVATITGVEPQQNKAIVGKNAFAHESGIHQDGVLKHQETYEIMKPEDVGVIKDSTLILGKHSGRAAFRDKIVQLGFDKVSDDELNAAFERFKVLADNKKEISDEDVRMLITDEALNHDKTYDLIGLQISDCTNGVPTAAVAIKYKDEIIKDAAIGDGTMDAIFKTIDRITGFSGELKDYKVISVTEGKDALAKVTTRVSFDETSPAFVGHGLSIDTMLATAKAYIGALNSYLSQKKRLSKSSEHQV</sequence>
<organism>
    <name type="scientific">Aliarcobacter butzleri (strain RM4018)</name>
    <name type="common">Arcobacter butzleri</name>
    <dbReference type="NCBI Taxonomy" id="367737"/>
    <lineage>
        <taxon>Bacteria</taxon>
        <taxon>Pseudomonadati</taxon>
        <taxon>Campylobacterota</taxon>
        <taxon>Epsilonproteobacteria</taxon>
        <taxon>Campylobacterales</taxon>
        <taxon>Arcobacteraceae</taxon>
        <taxon>Aliarcobacter</taxon>
    </lineage>
</organism>